<organism>
    <name type="scientific">Mycolicibacterium gilvum (strain PYR-GCK)</name>
    <name type="common">Mycobacterium gilvum (strain PYR-GCK)</name>
    <dbReference type="NCBI Taxonomy" id="350054"/>
    <lineage>
        <taxon>Bacteria</taxon>
        <taxon>Bacillati</taxon>
        <taxon>Actinomycetota</taxon>
        <taxon>Actinomycetes</taxon>
        <taxon>Mycobacteriales</taxon>
        <taxon>Mycobacteriaceae</taxon>
        <taxon>Mycolicibacterium</taxon>
    </lineage>
</organism>
<protein>
    <recommendedName>
        <fullName evidence="1">dCTP deaminase, dUMP-forming</fullName>
        <ecNumber evidence="1">3.5.4.30</ecNumber>
    </recommendedName>
    <alternativeName>
        <fullName evidence="1">Bifunctional dCTP deaminase:dUTPase</fullName>
    </alternativeName>
    <alternativeName>
        <fullName evidence="1">DCD-DUT</fullName>
    </alternativeName>
</protein>
<feature type="chain" id="PRO_1000076622" description="dCTP deaminase, dUMP-forming">
    <location>
        <begin position="1"/>
        <end position="190"/>
    </location>
</feature>
<feature type="region of interest" description="Disordered" evidence="2">
    <location>
        <begin position="163"/>
        <end position="190"/>
    </location>
</feature>
<feature type="active site" description="Proton donor/acceptor" evidence="1">
    <location>
        <position position="129"/>
    </location>
</feature>
<feature type="binding site" evidence="1">
    <location>
        <begin position="101"/>
        <end position="106"/>
    </location>
    <ligand>
        <name>dCTP</name>
        <dbReference type="ChEBI" id="CHEBI:61481"/>
    </ligand>
</feature>
<feature type="binding site" evidence="1">
    <location>
        <position position="119"/>
    </location>
    <ligand>
        <name>dCTP</name>
        <dbReference type="ChEBI" id="CHEBI:61481"/>
    </ligand>
</feature>
<feature type="binding site" evidence="1">
    <location>
        <begin position="127"/>
        <end position="129"/>
    </location>
    <ligand>
        <name>dCTP</name>
        <dbReference type="ChEBI" id="CHEBI:61481"/>
    </ligand>
</feature>
<feature type="binding site" evidence="1">
    <location>
        <position position="148"/>
    </location>
    <ligand>
        <name>dCTP</name>
        <dbReference type="ChEBI" id="CHEBI:61481"/>
    </ligand>
</feature>
<feature type="binding site" evidence="1">
    <location>
        <position position="162"/>
    </location>
    <ligand>
        <name>dCTP</name>
        <dbReference type="ChEBI" id="CHEBI:61481"/>
    </ligand>
</feature>
<feature type="binding site" evidence="1">
    <location>
        <position position="174"/>
    </location>
    <ligand>
        <name>dCTP</name>
        <dbReference type="ChEBI" id="CHEBI:61481"/>
    </ligand>
</feature>
<feature type="site" description="Important for bifunctional activity" evidence="1">
    <location>
        <begin position="116"/>
        <end position="117"/>
    </location>
</feature>
<dbReference type="EC" id="3.5.4.30" evidence="1"/>
<dbReference type="EMBL" id="CP000656">
    <property type="protein sequence ID" value="ABP42785.1"/>
    <property type="molecule type" value="Genomic_DNA"/>
</dbReference>
<dbReference type="SMR" id="A4T0X9"/>
<dbReference type="STRING" id="350054.Mflv_0291"/>
<dbReference type="KEGG" id="mgi:Mflv_0291"/>
<dbReference type="eggNOG" id="COG0717">
    <property type="taxonomic scope" value="Bacteria"/>
</dbReference>
<dbReference type="HOGENOM" id="CLU_087476_2_0_11"/>
<dbReference type="OrthoDB" id="9780956at2"/>
<dbReference type="UniPathway" id="UPA00610">
    <property type="reaction ID" value="UER00667"/>
</dbReference>
<dbReference type="GO" id="GO:0033973">
    <property type="term" value="F:dCTP deaminase (dUMP-forming) activity"/>
    <property type="evidence" value="ECO:0007669"/>
    <property type="project" value="UniProtKB-UniRule"/>
</dbReference>
<dbReference type="GO" id="GO:0008829">
    <property type="term" value="F:dCTP deaminase activity"/>
    <property type="evidence" value="ECO:0007669"/>
    <property type="project" value="InterPro"/>
</dbReference>
<dbReference type="GO" id="GO:0000166">
    <property type="term" value="F:nucleotide binding"/>
    <property type="evidence" value="ECO:0007669"/>
    <property type="project" value="UniProtKB-KW"/>
</dbReference>
<dbReference type="GO" id="GO:0006226">
    <property type="term" value="P:dUMP biosynthetic process"/>
    <property type="evidence" value="ECO:0007669"/>
    <property type="project" value="UniProtKB-UniRule"/>
</dbReference>
<dbReference type="GO" id="GO:0006229">
    <property type="term" value="P:dUTP biosynthetic process"/>
    <property type="evidence" value="ECO:0007669"/>
    <property type="project" value="InterPro"/>
</dbReference>
<dbReference type="GO" id="GO:0015949">
    <property type="term" value="P:nucleobase-containing small molecule interconversion"/>
    <property type="evidence" value="ECO:0007669"/>
    <property type="project" value="TreeGrafter"/>
</dbReference>
<dbReference type="CDD" id="cd07557">
    <property type="entry name" value="trimeric_dUTPase"/>
    <property type="match status" value="1"/>
</dbReference>
<dbReference type="FunFam" id="2.70.40.10:FF:000005">
    <property type="entry name" value="dCTP deaminase, dUMP-forming"/>
    <property type="match status" value="1"/>
</dbReference>
<dbReference type="Gene3D" id="2.70.40.10">
    <property type="match status" value="1"/>
</dbReference>
<dbReference type="HAMAP" id="MF_00146">
    <property type="entry name" value="dCTP_deaminase"/>
    <property type="match status" value="1"/>
</dbReference>
<dbReference type="InterPro" id="IPR011962">
    <property type="entry name" value="dCTP_deaminase"/>
</dbReference>
<dbReference type="InterPro" id="IPR036157">
    <property type="entry name" value="dUTPase-like_sf"/>
</dbReference>
<dbReference type="InterPro" id="IPR033704">
    <property type="entry name" value="dUTPase_trimeric"/>
</dbReference>
<dbReference type="NCBIfam" id="TIGR02274">
    <property type="entry name" value="dCTP_deam"/>
    <property type="match status" value="1"/>
</dbReference>
<dbReference type="PANTHER" id="PTHR42680">
    <property type="entry name" value="DCTP DEAMINASE"/>
    <property type="match status" value="1"/>
</dbReference>
<dbReference type="PANTHER" id="PTHR42680:SF3">
    <property type="entry name" value="DCTP DEAMINASE"/>
    <property type="match status" value="1"/>
</dbReference>
<dbReference type="Pfam" id="PF22769">
    <property type="entry name" value="DCD"/>
    <property type="match status" value="1"/>
</dbReference>
<dbReference type="SUPFAM" id="SSF51283">
    <property type="entry name" value="dUTPase-like"/>
    <property type="match status" value="1"/>
</dbReference>
<sequence length="190" mass="20876">MLLSDRDIRAEFQAGRLGLDPFDDSLIQPSSVDVRLDNLFRVFNNTRYTHIDPAQRQDDLTSLVEPKEGEPFVLHPGEFVLGATLERCTLPDDLAGRLEGKSSLGRLGLLTHSTAGFIDPGFSGHITLELSNVANLPITLWPGMKIGQLCLLRLTSPAQHPYGSSQVGSKYQGQRGPTPSKSYQNFVKSN</sequence>
<comment type="function">
    <text evidence="1">Bifunctional enzyme that catalyzes both the deamination of dCTP to dUTP and the hydrolysis of dUTP to dUMP without releasing the toxic dUTP intermediate.</text>
</comment>
<comment type="catalytic activity">
    <reaction evidence="1">
        <text>dCTP + 2 H2O = dUMP + NH4(+) + diphosphate</text>
        <dbReference type="Rhea" id="RHEA:19205"/>
        <dbReference type="ChEBI" id="CHEBI:15377"/>
        <dbReference type="ChEBI" id="CHEBI:28938"/>
        <dbReference type="ChEBI" id="CHEBI:33019"/>
        <dbReference type="ChEBI" id="CHEBI:61481"/>
        <dbReference type="ChEBI" id="CHEBI:246422"/>
        <dbReference type="EC" id="3.5.4.30"/>
    </reaction>
</comment>
<comment type="pathway">
    <text evidence="1">Pyrimidine metabolism; dUMP biosynthesis; dUMP from dCTP: step 1/1.</text>
</comment>
<comment type="subunit">
    <text evidence="1">Homotrimer.</text>
</comment>
<comment type="similarity">
    <text evidence="1">Belongs to the dCTP deaminase family.</text>
</comment>
<gene>
    <name evidence="1" type="primary">dcd</name>
    <name type="ordered locus">Mflv_0291</name>
</gene>
<reference key="1">
    <citation type="submission" date="2007-04" db="EMBL/GenBank/DDBJ databases">
        <title>Complete sequence of chromosome of Mycobacterium gilvum PYR-GCK.</title>
        <authorList>
            <consortium name="US DOE Joint Genome Institute"/>
            <person name="Copeland A."/>
            <person name="Lucas S."/>
            <person name="Lapidus A."/>
            <person name="Barry K."/>
            <person name="Detter J.C."/>
            <person name="Glavina del Rio T."/>
            <person name="Hammon N."/>
            <person name="Israni S."/>
            <person name="Dalin E."/>
            <person name="Tice H."/>
            <person name="Pitluck S."/>
            <person name="Chain P."/>
            <person name="Malfatti S."/>
            <person name="Shin M."/>
            <person name="Vergez L."/>
            <person name="Schmutz J."/>
            <person name="Larimer F."/>
            <person name="Land M."/>
            <person name="Hauser L."/>
            <person name="Kyrpides N."/>
            <person name="Mikhailova N."/>
            <person name="Miller C."/>
            <person name="Richardson P."/>
        </authorList>
    </citation>
    <scope>NUCLEOTIDE SEQUENCE [LARGE SCALE GENOMIC DNA]</scope>
    <source>
        <strain>PYR-GCK</strain>
    </source>
</reference>
<keyword id="KW-0378">Hydrolase</keyword>
<keyword id="KW-0546">Nucleotide metabolism</keyword>
<keyword id="KW-0547">Nucleotide-binding</keyword>
<proteinExistence type="inferred from homology"/>
<name>DCDB_MYCGI</name>
<evidence type="ECO:0000255" key="1">
    <source>
        <dbReference type="HAMAP-Rule" id="MF_00146"/>
    </source>
</evidence>
<evidence type="ECO:0000256" key="2">
    <source>
        <dbReference type="SAM" id="MobiDB-lite"/>
    </source>
</evidence>
<accession>A4T0X9</accession>